<accession>Q9AL99</accession>
<evidence type="ECO:0000250" key="1"/>
<evidence type="ECO:0000255" key="2">
    <source>
        <dbReference type="PROSITE-ProRule" id="PRU01126"/>
    </source>
</evidence>
<evidence type="ECO:0000305" key="3"/>
<dbReference type="EC" id="1.8.4.11"/>
<dbReference type="EC" id="1.8.4.12"/>
<dbReference type="EMBL" id="AY026361">
    <property type="protein sequence ID" value="AAK07680.1"/>
    <property type="molecule type" value="Genomic_DNA"/>
</dbReference>
<dbReference type="SMR" id="Q9AL99"/>
<dbReference type="STRING" id="714.ACT75_01890"/>
<dbReference type="eggNOG" id="COG0225">
    <property type="taxonomic scope" value="Bacteria"/>
</dbReference>
<dbReference type="eggNOG" id="COG0229">
    <property type="taxonomic scope" value="Bacteria"/>
</dbReference>
<dbReference type="OMA" id="GEFIPYI"/>
<dbReference type="BRENDA" id="1.8.4.11">
    <property type="organism ID" value="122"/>
</dbReference>
<dbReference type="GO" id="GO:0005737">
    <property type="term" value="C:cytoplasm"/>
    <property type="evidence" value="ECO:0007669"/>
    <property type="project" value="TreeGrafter"/>
</dbReference>
<dbReference type="GO" id="GO:0033744">
    <property type="term" value="F:L-methionine:thioredoxin-disulfide S-oxidoreductase activity"/>
    <property type="evidence" value="ECO:0007669"/>
    <property type="project" value="RHEA"/>
</dbReference>
<dbReference type="GO" id="GO:0033743">
    <property type="term" value="F:peptide-methionine (R)-S-oxide reductase activity"/>
    <property type="evidence" value="ECO:0007669"/>
    <property type="project" value="UniProtKB-UniRule"/>
</dbReference>
<dbReference type="GO" id="GO:0008113">
    <property type="term" value="F:peptide-methionine (S)-S-oxide reductase activity"/>
    <property type="evidence" value="ECO:0007669"/>
    <property type="project" value="UniProtKB-UniRule"/>
</dbReference>
<dbReference type="GO" id="GO:0036211">
    <property type="term" value="P:protein modification process"/>
    <property type="evidence" value="ECO:0007669"/>
    <property type="project" value="UniProtKB-UniRule"/>
</dbReference>
<dbReference type="GO" id="GO:0030091">
    <property type="term" value="P:protein repair"/>
    <property type="evidence" value="ECO:0007669"/>
    <property type="project" value="InterPro"/>
</dbReference>
<dbReference type="GO" id="GO:0006979">
    <property type="term" value="P:response to oxidative stress"/>
    <property type="evidence" value="ECO:0007669"/>
    <property type="project" value="InterPro"/>
</dbReference>
<dbReference type="FunFam" id="3.30.1060.10:FF:000007">
    <property type="entry name" value="Peptide methionine sulfoxide reductase msrA/msrB"/>
    <property type="match status" value="1"/>
</dbReference>
<dbReference type="FunFam" id="2.170.150.20:FF:000003">
    <property type="entry name" value="Peptide methionine sulfoxide reductase MsrB"/>
    <property type="match status" value="1"/>
</dbReference>
<dbReference type="Gene3D" id="2.170.150.20">
    <property type="entry name" value="Peptide methionine sulfoxide reductase"/>
    <property type="match status" value="1"/>
</dbReference>
<dbReference type="Gene3D" id="3.30.1060.10">
    <property type="entry name" value="Peptide methionine sulphoxide reductase MsrA"/>
    <property type="match status" value="1"/>
</dbReference>
<dbReference type="HAMAP" id="MF_01401">
    <property type="entry name" value="MsrA"/>
    <property type="match status" value="1"/>
</dbReference>
<dbReference type="HAMAP" id="MF_01400">
    <property type="entry name" value="MsrB"/>
    <property type="match status" value="1"/>
</dbReference>
<dbReference type="InterPro" id="IPR002569">
    <property type="entry name" value="Met_Sox_Rdtase_MsrA_dom"/>
</dbReference>
<dbReference type="InterPro" id="IPR036509">
    <property type="entry name" value="Met_Sox_Rdtase_MsrA_sf"/>
</dbReference>
<dbReference type="InterPro" id="IPR028427">
    <property type="entry name" value="Met_Sox_Rdtase_MsrB"/>
</dbReference>
<dbReference type="InterPro" id="IPR002579">
    <property type="entry name" value="Met_Sox_Rdtase_MsrB_dom"/>
</dbReference>
<dbReference type="InterPro" id="IPR011057">
    <property type="entry name" value="Mss4-like_sf"/>
</dbReference>
<dbReference type="NCBIfam" id="TIGR00401">
    <property type="entry name" value="msrA"/>
    <property type="match status" value="1"/>
</dbReference>
<dbReference type="NCBIfam" id="TIGR00357">
    <property type="entry name" value="peptide-methionine (R)-S-oxide reductase MsrB"/>
    <property type="match status" value="1"/>
</dbReference>
<dbReference type="PANTHER" id="PTHR10173">
    <property type="entry name" value="METHIONINE SULFOXIDE REDUCTASE"/>
    <property type="match status" value="1"/>
</dbReference>
<dbReference type="PANTHER" id="PTHR10173:SF59">
    <property type="entry name" value="PEPTIDE METHIONINE SULFOXIDE REDUCTASE MSRA_MSRB"/>
    <property type="match status" value="1"/>
</dbReference>
<dbReference type="Pfam" id="PF01625">
    <property type="entry name" value="PMSR"/>
    <property type="match status" value="1"/>
</dbReference>
<dbReference type="Pfam" id="PF01641">
    <property type="entry name" value="SelR"/>
    <property type="match status" value="1"/>
</dbReference>
<dbReference type="SUPFAM" id="SSF51316">
    <property type="entry name" value="Mss4-like"/>
    <property type="match status" value="1"/>
</dbReference>
<dbReference type="SUPFAM" id="SSF55068">
    <property type="entry name" value="Peptide methionine sulfoxide reductase"/>
    <property type="match status" value="1"/>
</dbReference>
<dbReference type="PROSITE" id="PS51790">
    <property type="entry name" value="MSRB"/>
    <property type="match status" value="1"/>
</dbReference>
<feature type="chain" id="PRO_0000138511" description="Peptide methionine sulfoxide reductase MsrA/MsrB">
    <location>
        <begin position="1"/>
        <end position="356"/>
    </location>
</feature>
<feature type="domain" description="MsrB" evidence="2">
    <location>
        <begin position="216"/>
        <end position="339"/>
    </location>
</feature>
<feature type="region of interest" description="Peptide methionine sulfoxide reductase A">
    <location>
        <begin position="46"/>
        <end position="199"/>
    </location>
</feature>
<feature type="active site" evidence="1">
    <location>
        <position position="54"/>
    </location>
</feature>
<feature type="active site" description="Nucleophile" evidence="2">
    <location>
        <position position="328"/>
    </location>
</feature>
<proteinExistence type="inferred from homology"/>
<gene>
    <name type="primary">msrAB</name>
</gene>
<reference key="1">
    <citation type="submission" date="2001-01" db="EMBL/GenBank/DDBJ databases">
        <title>Actinobacillus actinomycetemcomitans msrA.</title>
        <authorList>
            <person name="Mintz K.P."/>
            <person name="Wu H."/>
            <person name="Shao M."/>
            <person name="Fives-Taylor P.M."/>
        </authorList>
    </citation>
    <scope>NUCLEOTIDE SEQUENCE [GENOMIC DNA]</scope>
</reference>
<comment type="function">
    <text evidence="1">Has an important function as a repair enzyme for proteins that have been inactivated by oxidation. Catalyzes the reversible oxidation-reduction of methionine sulfoxide in proteins to methionine (By similarity).</text>
</comment>
<comment type="catalytic activity">
    <reaction>
        <text>L-methionyl-[protein] + [thioredoxin]-disulfide + H2O = L-methionyl-(S)-S-oxide-[protein] + [thioredoxin]-dithiol</text>
        <dbReference type="Rhea" id="RHEA:14217"/>
        <dbReference type="Rhea" id="RHEA-COMP:10698"/>
        <dbReference type="Rhea" id="RHEA-COMP:10700"/>
        <dbReference type="Rhea" id="RHEA-COMP:12313"/>
        <dbReference type="Rhea" id="RHEA-COMP:12315"/>
        <dbReference type="ChEBI" id="CHEBI:15377"/>
        <dbReference type="ChEBI" id="CHEBI:16044"/>
        <dbReference type="ChEBI" id="CHEBI:29950"/>
        <dbReference type="ChEBI" id="CHEBI:44120"/>
        <dbReference type="ChEBI" id="CHEBI:50058"/>
        <dbReference type="EC" id="1.8.4.11"/>
    </reaction>
</comment>
<comment type="catalytic activity">
    <reaction>
        <text>[thioredoxin]-disulfide + L-methionine + H2O = L-methionine (S)-S-oxide + [thioredoxin]-dithiol</text>
        <dbReference type="Rhea" id="RHEA:19993"/>
        <dbReference type="Rhea" id="RHEA-COMP:10698"/>
        <dbReference type="Rhea" id="RHEA-COMP:10700"/>
        <dbReference type="ChEBI" id="CHEBI:15377"/>
        <dbReference type="ChEBI" id="CHEBI:29950"/>
        <dbReference type="ChEBI" id="CHEBI:50058"/>
        <dbReference type="ChEBI" id="CHEBI:57844"/>
        <dbReference type="ChEBI" id="CHEBI:58772"/>
        <dbReference type="EC" id="1.8.4.11"/>
    </reaction>
</comment>
<comment type="catalytic activity">
    <reaction>
        <text>L-methionyl-[protein] + [thioredoxin]-disulfide + H2O = L-methionyl-(R)-S-oxide-[protein] + [thioredoxin]-dithiol</text>
        <dbReference type="Rhea" id="RHEA:24164"/>
        <dbReference type="Rhea" id="RHEA-COMP:10698"/>
        <dbReference type="Rhea" id="RHEA-COMP:10700"/>
        <dbReference type="Rhea" id="RHEA-COMP:12313"/>
        <dbReference type="Rhea" id="RHEA-COMP:12314"/>
        <dbReference type="ChEBI" id="CHEBI:15377"/>
        <dbReference type="ChEBI" id="CHEBI:16044"/>
        <dbReference type="ChEBI" id="CHEBI:29950"/>
        <dbReference type="ChEBI" id="CHEBI:45764"/>
        <dbReference type="ChEBI" id="CHEBI:50058"/>
        <dbReference type="EC" id="1.8.4.12"/>
    </reaction>
</comment>
<comment type="similarity">
    <text evidence="3">In the N-terminal section; belongs to the MsrA Met sulfoxide reductase family.</text>
</comment>
<comment type="similarity">
    <text evidence="3">In the C-terminal section; belongs to the MsrB Met sulfoxide reductase family.</text>
</comment>
<name>MSRAB_AGGAC</name>
<protein>
    <recommendedName>
        <fullName>Peptide methionine sulfoxide reductase MsrA/MsrB</fullName>
    </recommendedName>
    <domain>
        <recommendedName>
            <fullName>Peptide methionine sulfoxide reductase MsrA</fullName>
            <shortName>Protein-methionine-S-oxide reductase</shortName>
            <ecNumber>1.8.4.11</ecNumber>
        </recommendedName>
        <alternativeName>
            <fullName>Peptide-methionine (S)-S-oxide reductase</fullName>
            <shortName>Peptide Met(O) reductase</shortName>
        </alternativeName>
    </domain>
    <domain>
        <recommendedName>
            <fullName>Peptide methionine sulfoxide reductase MsrB</fullName>
            <ecNumber>1.8.4.12</ecNumber>
        </recommendedName>
        <alternativeName>
            <fullName>Peptide-methionine (R)-S-oxide reductase</fullName>
        </alternativeName>
    </domain>
</protein>
<keyword id="KW-0511">Multifunctional enzyme</keyword>
<keyword id="KW-0560">Oxidoreductase</keyword>
<sequence>MKKSKLVVALAAILSCAAIPTTVMAESNVQQTMEKSNMSEAKKDLHEIYLAGGCFWGIEAYMERIYGVEDAISGYANGKSDKTNYQKIGITDHAETVKVTYDRNKVSLDKLLKYYFQVIDPTSVNKQGNDRGRQYRTGIYYQDTADKSIIEKEITALQGKYKNKIQIEVEPLHNYIVAEEYHQDYLKKNPNGYCHIDLEQANYVIIDEKDYPKPSDAELKAKLTPLQYSVTQNKNTEHSFSNEYWDNFKPGIYVDVTTGEPLFSSKDKFESGCGWPSFTKPITKEVVTYQDDHSFNMLRTEVISRSGKAHLGHVFDDGPKDKGGLRYCINSAAVKFIPLEDMVKENYGYLTNAVKE</sequence>
<organism>
    <name type="scientific">Aggregatibacter actinomycetemcomitans</name>
    <name type="common">Actinobacillus actinomycetemcomitans</name>
    <name type="synonym">Haemophilus actinomycetemcomitans</name>
    <dbReference type="NCBI Taxonomy" id="714"/>
    <lineage>
        <taxon>Bacteria</taxon>
        <taxon>Pseudomonadati</taxon>
        <taxon>Pseudomonadota</taxon>
        <taxon>Gammaproteobacteria</taxon>
        <taxon>Pasteurellales</taxon>
        <taxon>Pasteurellaceae</taxon>
        <taxon>Aggregatibacter</taxon>
    </lineage>
</organism>